<sequence>MSSLLLFNDKSRALQADIVAVQSQVVYGSVGNSIAVPAIKQNGLNVFAVPTVLLSNTPHYDTFYGGAIPDEWFSGYLRALQERDALRQLRAVTTGYMGTASQIKILAEWLTALRKDHPDLLIMVDPVIGDIDSGIYVKPDLPEAYRQYLLPLAQGITPNIFELEILTGKNCRDLDSAIAAAKSLLSDTLKWVVITSASGNEENQEMQVVVVSADSVNVISHSRVKTDLKGTGDLFCAQLISGLLKGKALNDAVHRAGLRVLEVMRYTQQHESDELILPPLAEA</sequence>
<comment type="function">
    <text evidence="1">B6-vitamer kinase involved in the salvage pathway of pyridoxal 5'-phosphate (PLP). Catalyzes the phosphorylation of pyridoxine (PN), pyridoxal (PL), and pyridoxamine (PM), forming their respective 5'-phosphorylated esters, i.e. PNP, PLP and PMP.</text>
</comment>
<comment type="catalytic activity">
    <reaction evidence="1">
        <text>pyridoxal + ATP = pyridoxal 5'-phosphate + ADP + H(+)</text>
        <dbReference type="Rhea" id="RHEA:10224"/>
        <dbReference type="ChEBI" id="CHEBI:15378"/>
        <dbReference type="ChEBI" id="CHEBI:17310"/>
        <dbReference type="ChEBI" id="CHEBI:30616"/>
        <dbReference type="ChEBI" id="CHEBI:456216"/>
        <dbReference type="ChEBI" id="CHEBI:597326"/>
        <dbReference type="EC" id="2.7.1.35"/>
    </reaction>
</comment>
<comment type="catalytic activity">
    <reaction evidence="1">
        <text>pyridoxine + ATP = pyridoxine 5'-phosphate + ADP + H(+)</text>
        <dbReference type="Rhea" id="RHEA:25108"/>
        <dbReference type="ChEBI" id="CHEBI:15378"/>
        <dbReference type="ChEBI" id="CHEBI:16709"/>
        <dbReference type="ChEBI" id="CHEBI:30616"/>
        <dbReference type="ChEBI" id="CHEBI:58589"/>
        <dbReference type="ChEBI" id="CHEBI:456216"/>
        <dbReference type="EC" id="2.7.1.35"/>
    </reaction>
</comment>
<comment type="catalytic activity">
    <reaction evidence="1">
        <text>pyridoxamine + ATP = pyridoxamine 5'-phosphate + ADP + H(+)</text>
        <dbReference type="Rhea" id="RHEA:25104"/>
        <dbReference type="ChEBI" id="CHEBI:15378"/>
        <dbReference type="ChEBI" id="CHEBI:30616"/>
        <dbReference type="ChEBI" id="CHEBI:57761"/>
        <dbReference type="ChEBI" id="CHEBI:58451"/>
        <dbReference type="ChEBI" id="CHEBI:456216"/>
        <dbReference type="EC" id="2.7.1.35"/>
    </reaction>
</comment>
<comment type="cofactor">
    <cofactor evidence="1">
        <name>Mg(2+)</name>
        <dbReference type="ChEBI" id="CHEBI:18420"/>
    </cofactor>
</comment>
<comment type="pathway">
    <text evidence="1">Cofactor metabolism; pyridoxal 5'-phosphate salvage; pyridoxal 5'-phosphate from pyridoxal: step 1/1.</text>
</comment>
<comment type="pathway">
    <text evidence="1">Cofactor metabolism; pyridoxal 5'-phosphate salvage; pyridoxine 5'-phosphate from pyridoxine: step 1/1.</text>
</comment>
<comment type="pathway">
    <text evidence="1">Cofactor metabolism; pyridoxal 5'-phosphate salvage; pyridoxamine 5'-phosphate from pyridoxamine: step 1/1.</text>
</comment>
<comment type="subunit">
    <text evidence="1">Homodimer.</text>
</comment>
<comment type="similarity">
    <text evidence="1">Belongs to the pyridoxine kinase family. PdxK subfamily.</text>
</comment>
<keyword id="KW-0067">ATP-binding</keyword>
<keyword id="KW-0418">Kinase</keyword>
<keyword id="KW-0460">Magnesium</keyword>
<keyword id="KW-0479">Metal-binding</keyword>
<keyword id="KW-0547">Nucleotide-binding</keyword>
<keyword id="KW-1185">Reference proteome</keyword>
<keyword id="KW-0808">Transferase</keyword>
<keyword id="KW-0862">Zinc</keyword>
<proteinExistence type="inferred from homology"/>
<accession>A7ZPL9</accession>
<organism>
    <name type="scientific">Escherichia coli O139:H28 (strain E24377A / ETEC)</name>
    <dbReference type="NCBI Taxonomy" id="331111"/>
    <lineage>
        <taxon>Bacteria</taxon>
        <taxon>Pseudomonadati</taxon>
        <taxon>Pseudomonadota</taxon>
        <taxon>Gammaproteobacteria</taxon>
        <taxon>Enterobacterales</taxon>
        <taxon>Enterobacteriaceae</taxon>
        <taxon>Escherichia</taxon>
    </lineage>
</organism>
<dbReference type="EC" id="2.7.1.35" evidence="1"/>
<dbReference type="EMBL" id="CP000800">
    <property type="protein sequence ID" value="ABV19738.1"/>
    <property type="molecule type" value="Genomic_DNA"/>
</dbReference>
<dbReference type="RefSeq" id="WP_000096660.1">
    <property type="nucleotide sequence ID" value="NC_009801.1"/>
</dbReference>
<dbReference type="SMR" id="A7ZPL9"/>
<dbReference type="GeneID" id="93774712"/>
<dbReference type="KEGG" id="ecw:EcE24377A_2705"/>
<dbReference type="HOGENOM" id="CLU_046496_3_1_6"/>
<dbReference type="UniPathway" id="UPA01068">
    <property type="reaction ID" value="UER00298"/>
</dbReference>
<dbReference type="UniPathway" id="UPA01068">
    <property type="reaction ID" value="UER00299"/>
</dbReference>
<dbReference type="UniPathway" id="UPA01068">
    <property type="reaction ID" value="UER00300"/>
</dbReference>
<dbReference type="Proteomes" id="UP000001122">
    <property type="component" value="Chromosome"/>
</dbReference>
<dbReference type="GO" id="GO:0005829">
    <property type="term" value="C:cytosol"/>
    <property type="evidence" value="ECO:0007669"/>
    <property type="project" value="TreeGrafter"/>
</dbReference>
<dbReference type="GO" id="GO:0005524">
    <property type="term" value="F:ATP binding"/>
    <property type="evidence" value="ECO:0007669"/>
    <property type="project" value="UniProtKB-UniRule"/>
</dbReference>
<dbReference type="GO" id="GO:0008902">
    <property type="term" value="F:hydroxymethylpyrimidine kinase activity"/>
    <property type="evidence" value="ECO:0007669"/>
    <property type="project" value="TreeGrafter"/>
</dbReference>
<dbReference type="GO" id="GO:0000287">
    <property type="term" value="F:magnesium ion binding"/>
    <property type="evidence" value="ECO:0007669"/>
    <property type="project" value="UniProtKB-UniRule"/>
</dbReference>
<dbReference type="GO" id="GO:0008478">
    <property type="term" value="F:pyridoxal kinase activity"/>
    <property type="evidence" value="ECO:0007669"/>
    <property type="project" value="UniProtKB-UniRule"/>
</dbReference>
<dbReference type="GO" id="GO:0008270">
    <property type="term" value="F:zinc ion binding"/>
    <property type="evidence" value="ECO:0007669"/>
    <property type="project" value="UniProtKB-UniRule"/>
</dbReference>
<dbReference type="GO" id="GO:0009443">
    <property type="term" value="P:pyridoxal 5'-phosphate salvage"/>
    <property type="evidence" value="ECO:0007669"/>
    <property type="project" value="UniProtKB-UniRule"/>
</dbReference>
<dbReference type="CDD" id="cd01173">
    <property type="entry name" value="pyridoxal_pyridoxamine_kinase"/>
    <property type="match status" value="1"/>
</dbReference>
<dbReference type="FunFam" id="3.40.1190.20:FF:000009">
    <property type="entry name" value="Pyridoxine/pyridoxal/pyridoxamine kinase"/>
    <property type="match status" value="1"/>
</dbReference>
<dbReference type="Gene3D" id="3.40.1190.20">
    <property type="match status" value="1"/>
</dbReference>
<dbReference type="HAMAP" id="MF_01638">
    <property type="entry name" value="PdxK"/>
    <property type="match status" value="1"/>
</dbReference>
<dbReference type="InterPro" id="IPR023479">
    <property type="entry name" value="PdxK"/>
</dbReference>
<dbReference type="InterPro" id="IPR013749">
    <property type="entry name" value="PM/HMP-P_kinase-1"/>
</dbReference>
<dbReference type="InterPro" id="IPR004625">
    <property type="entry name" value="PyrdxlKinase"/>
</dbReference>
<dbReference type="InterPro" id="IPR029056">
    <property type="entry name" value="Ribokinase-like"/>
</dbReference>
<dbReference type="NCBIfam" id="NF006034">
    <property type="entry name" value="PRK08176.1"/>
    <property type="match status" value="1"/>
</dbReference>
<dbReference type="NCBIfam" id="TIGR00687">
    <property type="entry name" value="pyridox_kin"/>
    <property type="match status" value="1"/>
</dbReference>
<dbReference type="PANTHER" id="PTHR10534">
    <property type="entry name" value="PYRIDOXAL KINASE"/>
    <property type="match status" value="1"/>
</dbReference>
<dbReference type="PANTHER" id="PTHR10534:SF15">
    <property type="entry name" value="PYRIDOXINE_PYRIDOXAL_PYRIDOXAMINE KINASE"/>
    <property type="match status" value="1"/>
</dbReference>
<dbReference type="Pfam" id="PF08543">
    <property type="entry name" value="Phos_pyr_kin"/>
    <property type="match status" value="1"/>
</dbReference>
<dbReference type="SUPFAM" id="SSF53613">
    <property type="entry name" value="Ribokinase-like"/>
    <property type="match status" value="1"/>
</dbReference>
<evidence type="ECO:0000255" key="1">
    <source>
        <dbReference type="HAMAP-Rule" id="MF_01638"/>
    </source>
</evidence>
<protein>
    <recommendedName>
        <fullName evidence="1">Pyridoxine/pyridoxal/pyridoxamine kinase</fullName>
        <shortName evidence="1">PN/PL/PM kinase</shortName>
        <ecNumber evidence="1">2.7.1.35</ecNumber>
    </recommendedName>
    <alternativeName>
        <fullName evidence="1">B6-vitamer kinase</fullName>
    </alternativeName>
</protein>
<gene>
    <name evidence="1" type="primary">pdxK</name>
    <name type="ordered locus">EcE24377A_2705</name>
</gene>
<name>PDXK_ECO24</name>
<feature type="chain" id="PRO_1000069881" description="Pyridoxine/pyridoxal/pyridoxamine kinase">
    <location>
        <begin position="1"/>
        <end position="283"/>
    </location>
</feature>
<feature type="binding site" evidence="1">
    <location>
        <position position="23"/>
    </location>
    <ligand>
        <name>substrate</name>
    </ligand>
</feature>
<feature type="binding site" evidence="1">
    <location>
        <position position="59"/>
    </location>
    <ligand>
        <name>substrate</name>
    </ligand>
</feature>
<feature type="binding site" evidence="1">
    <location>
        <position position="125"/>
    </location>
    <ligand>
        <name>ATP</name>
        <dbReference type="ChEBI" id="CHEBI:30616"/>
    </ligand>
</feature>
<feature type="binding site" evidence="1">
    <location>
        <position position="136"/>
    </location>
    <ligand>
        <name>Mg(2+)</name>
        <dbReference type="ChEBI" id="CHEBI:18420"/>
    </ligand>
</feature>
<feature type="binding site" evidence="1">
    <location>
        <position position="157"/>
    </location>
    <ligand>
        <name>ATP</name>
        <dbReference type="ChEBI" id="CHEBI:30616"/>
    </ligand>
</feature>
<feature type="binding site" evidence="1">
    <location>
        <position position="162"/>
    </location>
    <ligand>
        <name>ATP</name>
        <dbReference type="ChEBI" id="CHEBI:30616"/>
    </ligand>
</feature>
<feature type="binding site" evidence="1">
    <location>
        <position position="162"/>
    </location>
    <ligand>
        <name>Mg(2+)</name>
        <dbReference type="ChEBI" id="CHEBI:18420"/>
    </ligand>
</feature>
<feature type="binding site" evidence="1">
    <location>
        <position position="195"/>
    </location>
    <ligand>
        <name>ATP</name>
        <dbReference type="ChEBI" id="CHEBI:30616"/>
    </ligand>
</feature>
<feature type="binding site" evidence="1">
    <location>
        <begin position="221"/>
        <end position="224"/>
    </location>
    <ligand>
        <name>ATP</name>
        <dbReference type="ChEBI" id="CHEBI:30616"/>
    </ligand>
</feature>
<feature type="binding site" evidence="1">
    <location>
        <position position="231"/>
    </location>
    <ligand>
        <name>ATP</name>
        <dbReference type="ChEBI" id="CHEBI:30616"/>
    </ligand>
</feature>
<feature type="binding site" evidence="1">
    <location>
        <position position="233"/>
    </location>
    <ligand>
        <name>substrate</name>
    </ligand>
</feature>
<reference key="1">
    <citation type="journal article" date="2008" name="J. Bacteriol.">
        <title>The pangenome structure of Escherichia coli: comparative genomic analysis of E. coli commensal and pathogenic isolates.</title>
        <authorList>
            <person name="Rasko D.A."/>
            <person name="Rosovitz M.J."/>
            <person name="Myers G.S.A."/>
            <person name="Mongodin E.F."/>
            <person name="Fricke W.F."/>
            <person name="Gajer P."/>
            <person name="Crabtree J."/>
            <person name="Sebaihia M."/>
            <person name="Thomson N.R."/>
            <person name="Chaudhuri R."/>
            <person name="Henderson I.R."/>
            <person name="Sperandio V."/>
            <person name="Ravel J."/>
        </authorList>
    </citation>
    <scope>NUCLEOTIDE SEQUENCE [LARGE SCALE GENOMIC DNA]</scope>
    <source>
        <strain>E24377A / ETEC</strain>
    </source>
</reference>